<sequence>MSKSICSTGLRWLWVVVAVLIIDLGSKFLILQNFALGETVSLFPSLNLHYARNYGAAFSFLADSGGWQRWFFAGIAVGICVVLAVLMYRSKATQKLNNIAYALIIGGALGNLFDRLWHGFVVDMIDFYVGDWHFATFNLADSAICIGAALIVLEGFLPSSDKKTS</sequence>
<gene>
    <name evidence="1" type="primary">lspA</name>
    <name type="synonym">lsp</name>
    <name type="ordered locus">EAE_10850</name>
</gene>
<protein>
    <recommendedName>
        <fullName evidence="1">Lipoprotein signal peptidase</fullName>
        <ecNumber evidence="1">3.4.23.36</ecNumber>
    </recommendedName>
    <alternativeName>
        <fullName evidence="1">Prolipoprotein signal peptidase</fullName>
    </alternativeName>
    <alternativeName>
        <fullName evidence="1">Signal peptidase II</fullName>
        <shortName evidence="1">SPase II</shortName>
    </alternativeName>
</protein>
<comment type="function">
    <text evidence="1">This protein specifically catalyzes the removal of signal peptides from prolipoproteins.</text>
</comment>
<comment type="catalytic activity">
    <reaction evidence="1">
        <text>Release of signal peptides from bacterial membrane prolipoproteins. Hydrolyzes -Xaa-Yaa-Zaa-|-(S,diacylglyceryl)Cys-, in which Xaa is hydrophobic (preferably Leu), and Yaa (Ala or Ser) and Zaa (Gly or Ala) have small, neutral side chains.</text>
        <dbReference type="EC" id="3.4.23.36"/>
    </reaction>
</comment>
<comment type="pathway">
    <text evidence="1">Protein modification; lipoprotein biosynthesis (signal peptide cleavage).</text>
</comment>
<comment type="subcellular location">
    <subcellularLocation>
        <location evidence="1">Cell inner membrane</location>
        <topology evidence="1">Multi-pass membrane protein</topology>
    </subcellularLocation>
</comment>
<comment type="similarity">
    <text evidence="1 2">Belongs to the peptidase A8 family.</text>
</comment>
<dbReference type="EC" id="3.4.23.36" evidence="1"/>
<dbReference type="EMBL" id="M26713">
    <property type="protein sequence ID" value="AAA24804.1"/>
    <property type="molecule type" value="Genomic_DNA"/>
</dbReference>
<dbReference type="EMBL" id="CP002824">
    <property type="protein sequence ID" value="AEG97086.1"/>
    <property type="molecule type" value="Genomic_DNA"/>
</dbReference>
<dbReference type="RefSeq" id="WP_015368327.1">
    <property type="nucleotide sequence ID" value="NC_015663.1"/>
</dbReference>
<dbReference type="RefSeq" id="YP_004592365.1">
    <property type="nucleotide sequence ID" value="NC_015663.1"/>
</dbReference>
<dbReference type="SMR" id="P13514"/>
<dbReference type="MEROPS" id="A08.001"/>
<dbReference type="GeneID" id="93310352"/>
<dbReference type="KEGG" id="eae:EAE_10850"/>
<dbReference type="PATRIC" id="fig|1028307.3.peg.2162"/>
<dbReference type="eggNOG" id="COG0597">
    <property type="taxonomic scope" value="Bacteria"/>
</dbReference>
<dbReference type="HOGENOM" id="CLU_083252_4_0_6"/>
<dbReference type="OrthoDB" id="9810259at2"/>
<dbReference type="UniPathway" id="UPA00665"/>
<dbReference type="Proteomes" id="UP000008881">
    <property type="component" value="Chromosome"/>
</dbReference>
<dbReference type="GO" id="GO:0005886">
    <property type="term" value="C:plasma membrane"/>
    <property type="evidence" value="ECO:0007669"/>
    <property type="project" value="UniProtKB-SubCell"/>
</dbReference>
<dbReference type="GO" id="GO:0004190">
    <property type="term" value="F:aspartic-type endopeptidase activity"/>
    <property type="evidence" value="ECO:0007669"/>
    <property type="project" value="UniProtKB-UniRule"/>
</dbReference>
<dbReference type="GO" id="GO:0006508">
    <property type="term" value="P:proteolysis"/>
    <property type="evidence" value="ECO:0007669"/>
    <property type="project" value="UniProtKB-KW"/>
</dbReference>
<dbReference type="HAMAP" id="MF_00161">
    <property type="entry name" value="LspA"/>
    <property type="match status" value="1"/>
</dbReference>
<dbReference type="InterPro" id="IPR001872">
    <property type="entry name" value="Peptidase_A8"/>
</dbReference>
<dbReference type="NCBIfam" id="TIGR00077">
    <property type="entry name" value="lspA"/>
    <property type="match status" value="1"/>
</dbReference>
<dbReference type="PANTHER" id="PTHR33695">
    <property type="entry name" value="LIPOPROTEIN SIGNAL PEPTIDASE"/>
    <property type="match status" value="1"/>
</dbReference>
<dbReference type="PANTHER" id="PTHR33695:SF1">
    <property type="entry name" value="LIPOPROTEIN SIGNAL PEPTIDASE"/>
    <property type="match status" value="1"/>
</dbReference>
<dbReference type="Pfam" id="PF01252">
    <property type="entry name" value="Peptidase_A8"/>
    <property type="match status" value="1"/>
</dbReference>
<dbReference type="PRINTS" id="PR00781">
    <property type="entry name" value="LIPOSIGPTASE"/>
</dbReference>
<dbReference type="PROSITE" id="PS00855">
    <property type="entry name" value="SPASE_II"/>
    <property type="match status" value="1"/>
</dbReference>
<organism>
    <name type="scientific">Klebsiella aerogenes (strain ATCC 13048 / DSM 30053 / CCUG 1429 / JCM 1235 / KCTC 2190 / NBRC 13534 / NCIMB 10102 / NCTC 10006 / CDC 819-56)</name>
    <name type="common">Enterobacter aerogenes</name>
    <dbReference type="NCBI Taxonomy" id="1028307"/>
    <lineage>
        <taxon>Bacteria</taxon>
        <taxon>Pseudomonadati</taxon>
        <taxon>Pseudomonadota</taxon>
        <taxon>Gammaproteobacteria</taxon>
        <taxon>Enterobacterales</taxon>
        <taxon>Enterobacteriaceae</taxon>
        <taxon>Klebsiella/Raoultella group</taxon>
        <taxon>Klebsiella</taxon>
    </lineage>
</organism>
<keyword id="KW-0064">Aspartyl protease</keyword>
<keyword id="KW-0997">Cell inner membrane</keyword>
<keyword id="KW-1003">Cell membrane</keyword>
<keyword id="KW-0378">Hydrolase</keyword>
<keyword id="KW-0472">Membrane</keyword>
<keyword id="KW-0645">Protease</keyword>
<keyword id="KW-1185">Reference proteome</keyword>
<keyword id="KW-0812">Transmembrane</keyword>
<keyword id="KW-1133">Transmembrane helix</keyword>
<proteinExistence type="inferred from homology"/>
<evidence type="ECO:0000255" key="1">
    <source>
        <dbReference type="HAMAP-Rule" id="MF_00161"/>
    </source>
</evidence>
<evidence type="ECO:0000305" key="2"/>
<accession>P13514</accession>
<accession>G0E467</accession>
<reference key="1">
    <citation type="journal article" date="1990" name="J. Bacteriol.">
        <title>Cloning and nucleotide sequence of the Enterobacter aerogenes signal peptidase II (lsp) gene.</title>
        <authorList>
            <person name="Isaki L."/>
            <person name="Kawakami M."/>
            <person name="Beers R."/>
            <person name="Hom R."/>
            <person name="Wu H.C."/>
        </authorList>
    </citation>
    <scope>NUCLEOTIDE SEQUENCE [GENOMIC DNA]</scope>
    <source>
        <strain>ATCC 13048 / DSM 30053 / CCUG 1429 / JCM 1235 / KCTC 2190 / NBRC 13534 / NCIMB 10102 / NCTC 10006 / CDC 819-56</strain>
    </source>
</reference>
<reference key="2">
    <citation type="journal article" date="2012" name="J. Bacteriol.">
        <title>Complete genome sequence of Enterobacter aerogenes KCTC 2190.</title>
        <authorList>
            <person name="Shin S.H."/>
            <person name="Kim S."/>
            <person name="Kim J.Y."/>
            <person name="Lee S."/>
            <person name="Um Y."/>
            <person name="Oh M.K."/>
            <person name="Kim Y.R."/>
            <person name="Lee J."/>
            <person name="Yang K.S."/>
        </authorList>
    </citation>
    <scope>NUCLEOTIDE SEQUENCE [LARGE SCALE GENOMIC DNA]</scope>
    <source>
        <strain>ATCC 13048 / DSM 30053 / CCUG 1429 / JCM 1235 / KCTC 2190 / NBRC 13534 / NCIMB 10102 / NCTC 10006 / CDC 819-56</strain>
    </source>
</reference>
<name>LSPA_KLEAK</name>
<feature type="chain" id="PRO_0000178781" description="Lipoprotein signal peptidase">
    <location>
        <begin position="1"/>
        <end position="165"/>
    </location>
</feature>
<feature type="transmembrane region" description="Helical" evidence="1">
    <location>
        <begin position="12"/>
        <end position="32"/>
    </location>
</feature>
<feature type="transmembrane region" description="Helical" evidence="1">
    <location>
        <begin position="70"/>
        <end position="90"/>
    </location>
</feature>
<feature type="transmembrane region" description="Helical" evidence="1">
    <location>
        <begin position="102"/>
        <end position="122"/>
    </location>
</feature>
<feature type="transmembrane region" description="Helical" evidence="1">
    <location>
        <begin position="137"/>
        <end position="157"/>
    </location>
</feature>
<feature type="active site" evidence="1">
    <location>
        <position position="123"/>
    </location>
</feature>
<feature type="active site" evidence="1">
    <location>
        <position position="141"/>
    </location>
</feature>